<reference key="1">
    <citation type="journal article" date="1999" name="Mamm. Genome">
        <title>Human-mouse comparative mapping of the genomic region containing CDK6: localization of an evolutionary breakpoint.</title>
        <authorList>
            <person name="Thomas J.W."/>
            <person name="Lee-Lin S.Q."/>
            <person name="Green E.D."/>
        </authorList>
    </citation>
    <scope>NUCLEOTIDE SEQUENCE [MRNA]</scope>
    <source>
        <strain>BALB/cJ</strain>
        <strain>C57BL/6J</strain>
        <strain>SPRET/Ei</strain>
        <tissue>Testis</tissue>
    </source>
</reference>
<reference key="2">
    <citation type="journal article" date="2005" name="Science">
        <title>The transcriptional landscape of the mammalian genome.</title>
        <authorList>
            <person name="Carninci P."/>
            <person name="Kasukawa T."/>
            <person name="Katayama S."/>
            <person name="Gough J."/>
            <person name="Frith M.C."/>
            <person name="Maeda N."/>
            <person name="Oyama R."/>
            <person name="Ravasi T."/>
            <person name="Lenhard B."/>
            <person name="Wells C."/>
            <person name="Kodzius R."/>
            <person name="Shimokawa K."/>
            <person name="Bajic V.B."/>
            <person name="Brenner S.E."/>
            <person name="Batalov S."/>
            <person name="Forrest A.R."/>
            <person name="Zavolan M."/>
            <person name="Davis M.J."/>
            <person name="Wilming L.G."/>
            <person name="Aidinis V."/>
            <person name="Allen J.E."/>
            <person name="Ambesi-Impiombato A."/>
            <person name="Apweiler R."/>
            <person name="Aturaliya R.N."/>
            <person name="Bailey T.L."/>
            <person name="Bansal M."/>
            <person name="Baxter L."/>
            <person name="Beisel K.W."/>
            <person name="Bersano T."/>
            <person name="Bono H."/>
            <person name="Chalk A.M."/>
            <person name="Chiu K.P."/>
            <person name="Choudhary V."/>
            <person name="Christoffels A."/>
            <person name="Clutterbuck D.R."/>
            <person name="Crowe M.L."/>
            <person name="Dalla E."/>
            <person name="Dalrymple B.P."/>
            <person name="de Bono B."/>
            <person name="Della Gatta G."/>
            <person name="di Bernardo D."/>
            <person name="Down T."/>
            <person name="Engstrom P."/>
            <person name="Fagiolini M."/>
            <person name="Faulkner G."/>
            <person name="Fletcher C.F."/>
            <person name="Fukushima T."/>
            <person name="Furuno M."/>
            <person name="Futaki S."/>
            <person name="Gariboldi M."/>
            <person name="Georgii-Hemming P."/>
            <person name="Gingeras T.R."/>
            <person name="Gojobori T."/>
            <person name="Green R.E."/>
            <person name="Gustincich S."/>
            <person name="Harbers M."/>
            <person name="Hayashi Y."/>
            <person name="Hensch T.K."/>
            <person name="Hirokawa N."/>
            <person name="Hill D."/>
            <person name="Huminiecki L."/>
            <person name="Iacono M."/>
            <person name="Ikeo K."/>
            <person name="Iwama A."/>
            <person name="Ishikawa T."/>
            <person name="Jakt M."/>
            <person name="Kanapin A."/>
            <person name="Katoh M."/>
            <person name="Kawasawa Y."/>
            <person name="Kelso J."/>
            <person name="Kitamura H."/>
            <person name="Kitano H."/>
            <person name="Kollias G."/>
            <person name="Krishnan S.P."/>
            <person name="Kruger A."/>
            <person name="Kummerfeld S.K."/>
            <person name="Kurochkin I.V."/>
            <person name="Lareau L.F."/>
            <person name="Lazarevic D."/>
            <person name="Lipovich L."/>
            <person name="Liu J."/>
            <person name="Liuni S."/>
            <person name="McWilliam S."/>
            <person name="Madan Babu M."/>
            <person name="Madera M."/>
            <person name="Marchionni L."/>
            <person name="Matsuda H."/>
            <person name="Matsuzawa S."/>
            <person name="Miki H."/>
            <person name="Mignone F."/>
            <person name="Miyake S."/>
            <person name="Morris K."/>
            <person name="Mottagui-Tabar S."/>
            <person name="Mulder N."/>
            <person name="Nakano N."/>
            <person name="Nakauchi H."/>
            <person name="Ng P."/>
            <person name="Nilsson R."/>
            <person name="Nishiguchi S."/>
            <person name="Nishikawa S."/>
            <person name="Nori F."/>
            <person name="Ohara O."/>
            <person name="Okazaki Y."/>
            <person name="Orlando V."/>
            <person name="Pang K.C."/>
            <person name="Pavan W.J."/>
            <person name="Pavesi G."/>
            <person name="Pesole G."/>
            <person name="Petrovsky N."/>
            <person name="Piazza S."/>
            <person name="Reed J."/>
            <person name="Reid J.F."/>
            <person name="Ring B.Z."/>
            <person name="Ringwald M."/>
            <person name="Rost B."/>
            <person name="Ruan Y."/>
            <person name="Salzberg S.L."/>
            <person name="Sandelin A."/>
            <person name="Schneider C."/>
            <person name="Schoenbach C."/>
            <person name="Sekiguchi K."/>
            <person name="Semple C.A."/>
            <person name="Seno S."/>
            <person name="Sessa L."/>
            <person name="Sheng Y."/>
            <person name="Shibata Y."/>
            <person name="Shimada H."/>
            <person name="Shimada K."/>
            <person name="Silva D."/>
            <person name="Sinclair B."/>
            <person name="Sperling S."/>
            <person name="Stupka E."/>
            <person name="Sugiura K."/>
            <person name="Sultana R."/>
            <person name="Takenaka Y."/>
            <person name="Taki K."/>
            <person name="Tammoja K."/>
            <person name="Tan S.L."/>
            <person name="Tang S."/>
            <person name="Taylor M.S."/>
            <person name="Tegner J."/>
            <person name="Teichmann S.A."/>
            <person name="Ueda H.R."/>
            <person name="van Nimwegen E."/>
            <person name="Verardo R."/>
            <person name="Wei C.L."/>
            <person name="Yagi K."/>
            <person name="Yamanishi H."/>
            <person name="Zabarovsky E."/>
            <person name="Zhu S."/>
            <person name="Zimmer A."/>
            <person name="Hide W."/>
            <person name="Bult C."/>
            <person name="Grimmond S.M."/>
            <person name="Teasdale R.D."/>
            <person name="Liu E.T."/>
            <person name="Brusic V."/>
            <person name="Quackenbush J."/>
            <person name="Wahlestedt C."/>
            <person name="Mattick J.S."/>
            <person name="Hume D.A."/>
            <person name="Kai C."/>
            <person name="Sasaki D."/>
            <person name="Tomaru Y."/>
            <person name="Fukuda S."/>
            <person name="Kanamori-Katayama M."/>
            <person name="Suzuki M."/>
            <person name="Aoki J."/>
            <person name="Arakawa T."/>
            <person name="Iida J."/>
            <person name="Imamura K."/>
            <person name="Itoh M."/>
            <person name="Kato T."/>
            <person name="Kawaji H."/>
            <person name="Kawagashira N."/>
            <person name="Kawashima T."/>
            <person name="Kojima M."/>
            <person name="Kondo S."/>
            <person name="Konno H."/>
            <person name="Nakano K."/>
            <person name="Ninomiya N."/>
            <person name="Nishio T."/>
            <person name="Okada M."/>
            <person name="Plessy C."/>
            <person name="Shibata K."/>
            <person name="Shiraki T."/>
            <person name="Suzuki S."/>
            <person name="Tagami M."/>
            <person name="Waki K."/>
            <person name="Watahiki A."/>
            <person name="Okamura-Oho Y."/>
            <person name="Suzuki H."/>
            <person name="Kawai J."/>
            <person name="Hayashizaki Y."/>
        </authorList>
    </citation>
    <scope>NUCLEOTIDE SEQUENCE [LARGE SCALE MRNA]</scope>
    <source>
        <strain>C57BL/6J</strain>
        <tissue>Cecum</tissue>
    </source>
</reference>
<reference key="3">
    <citation type="journal article" date="1993" name="Gene">
        <title>Novel CDC2-related protein kinases produced in murine hematopoietic stem cells.</title>
        <authorList>
            <person name="Ershler M.A."/>
            <person name="Nagorskaya T.V."/>
            <person name="Visser J.W.M."/>
            <person name="Belyavsky A.V."/>
        </authorList>
    </citation>
    <scope>NUCLEOTIDE SEQUENCE [MRNA] OF 149-183</scope>
    <source>
        <strain>CBA/J</strain>
        <tissue>Bone marrow</tissue>
    </source>
</reference>
<reference key="4">
    <citation type="journal article" date="1992" name="Dokl. Akad. Nauk SSSR">
        <title>Identification of new protein kinase genes, similar to kinases of the cdc2 family and expressed in murine hematopoietic stem cells.</title>
        <authorList>
            <person name="Ershler M.A."/>
            <person name="Nagorskaya T.V."/>
            <person name="Visser J.W.M."/>
            <person name="Belyavsky A.V."/>
        </authorList>
    </citation>
    <scope>NUCLEOTIDE SEQUENCE [MRNA] OF 149-183</scope>
    <source>
        <strain>CBA/J</strain>
        <tissue>Bone marrow</tissue>
    </source>
</reference>
<reference key="5">
    <citation type="journal article" date="2004" name="Cell">
        <title>Mammalian cells cycle without the D-type cyclin-dependent kinases Cdk4 and Cdk6.</title>
        <authorList>
            <person name="Malumbres M."/>
            <person name="Sotillo R."/>
            <person name="Santamaria D."/>
            <person name="Galan J."/>
            <person name="Cerezo A."/>
            <person name="Ortega S."/>
            <person name="Dubus P."/>
            <person name="Barbacid M."/>
        </authorList>
    </citation>
    <scope>DISRUPTION PHENOTYPE</scope>
</reference>
<reference key="6">
    <citation type="journal article" date="2006" name="J. Cell. Biochem.">
        <title>Changes in motility, gene expression and actin dynamics: Cdk6-induced cytoskeletal changes associated with differentiation in mouse astrocytes.</title>
        <authorList>
            <person name="Slomiany P."/>
            <person name="Baker T."/>
            <person name="Elliott E.R."/>
            <person name="Grossel M.J."/>
        </authorList>
    </citation>
    <scope>FUNCTION IN CELL DIFFERENTIATION</scope>
</reference>
<reference key="7">
    <citation type="journal article" date="2010" name="Cell">
        <title>A tissue-specific atlas of mouse protein phosphorylation and expression.</title>
        <authorList>
            <person name="Huttlin E.L."/>
            <person name="Jedrychowski M.P."/>
            <person name="Elias J.E."/>
            <person name="Goswami T."/>
            <person name="Rad R."/>
            <person name="Beausoleil S.A."/>
            <person name="Villen J."/>
            <person name="Haas W."/>
            <person name="Sowa M.E."/>
            <person name="Gygi S.P."/>
        </authorList>
    </citation>
    <scope>PHOSPHORYLATION [LARGE SCALE ANALYSIS] AT SER-319</scope>
    <scope>IDENTIFICATION BY MASS SPECTROMETRY [LARGE SCALE ANALYSIS]</scope>
    <source>
        <tissue>Brown adipose tissue</tissue>
        <tissue>Heart</tissue>
        <tissue>Liver</tissue>
        <tissue>Lung</tissue>
        <tissue>Spleen</tissue>
    </source>
</reference>
<reference key="8">
    <citation type="journal article" date="2011" name="Blood">
        <title>CDK6 kinase activity is required for thymocyte development.</title>
        <authorList>
            <person name="Hu M.G."/>
            <person name="Deshpande A."/>
            <person name="Schlichting N."/>
            <person name="Hinds E.A."/>
            <person name="Mao C."/>
            <person name="Dose M."/>
            <person name="Hu G.F."/>
            <person name="Van Etten R.A."/>
            <person name="Gounari F."/>
            <person name="Hinds P.W."/>
        </authorList>
    </citation>
    <scope>FUNCTION IN THYMOCYTE DEVELOPMENT</scope>
    <scope>DISRUPTION PHENOTYPE</scope>
    <scope>MUTAGENESIS OF ARG-31 AND LYS-43</scope>
</reference>
<reference key="9">
    <citation type="journal article" date="2011" name="Stem Cells">
        <title>Cdk6-dependent regulation of G(1) length controls adult neurogenesis.</title>
        <authorList>
            <person name="Beukelaers P."/>
            <person name="Vandenbosch R."/>
            <person name="Caron N."/>
            <person name="Nguyen L."/>
            <person name="Belachew S."/>
            <person name="Moonen G."/>
            <person name="Kiyokawa H."/>
            <person name="Barbacid M."/>
            <person name="Santamaria D."/>
            <person name="Malgrange B."/>
        </authorList>
    </citation>
    <scope>FUNCTION IN NEURON PRODUCTION</scope>
    <scope>DISRUPTION PHENOTYPE</scope>
    <scope>TISSUE SPECIFICITY</scope>
</reference>
<reference key="10">
    <citation type="journal article" date="2013" name="Hum. Mol. Genet.">
        <title>CDK6 associates with the centrosome during mitosis and is mutated in a large Pakistani family with primary microcephaly.</title>
        <authorList>
            <person name="Hussain M.S."/>
            <person name="Baig S.M."/>
            <person name="Neumann S."/>
            <person name="Peche V.S."/>
            <person name="Szczepanski S."/>
            <person name="Nurnberg G."/>
            <person name="Tariq M."/>
            <person name="Jameel M."/>
            <person name="Khan T.N."/>
            <person name="Fatima A."/>
            <person name="Malik N.A."/>
            <person name="Ahmad I."/>
            <person name="Altmuller J."/>
            <person name="Frommolt P."/>
            <person name="Thiele H."/>
            <person name="Hohne W."/>
            <person name="Yigit G."/>
            <person name="Wollnik B."/>
            <person name="Neubauer B.A."/>
            <person name="Nurnberg P."/>
            <person name="Noegel A.A."/>
        </authorList>
    </citation>
    <scope>TISSUE SPECIFICITY</scope>
    <scope>SUBCELLULAR LOCATION</scope>
</reference>
<proteinExistence type="evidence at protein level"/>
<feature type="chain" id="PRO_0000085790" description="Cyclin-dependent kinase 6">
    <location>
        <begin position="1"/>
        <end position="326"/>
    </location>
</feature>
<feature type="domain" description="Protein kinase" evidence="3">
    <location>
        <begin position="13"/>
        <end position="300"/>
    </location>
</feature>
<feature type="active site" description="Proton acceptor" evidence="3 4">
    <location>
        <position position="145"/>
    </location>
</feature>
<feature type="binding site" evidence="3">
    <location>
        <begin position="19"/>
        <end position="27"/>
    </location>
    <ligand>
        <name>ATP</name>
        <dbReference type="ChEBI" id="CHEBI:30616"/>
    </ligand>
</feature>
<feature type="binding site" evidence="3">
    <location>
        <position position="43"/>
    </location>
    <ligand>
        <name>ATP</name>
        <dbReference type="ChEBI" id="CHEBI:30616"/>
    </ligand>
</feature>
<feature type="modified residue" description="N-acetylmethionine" evidence="2">
    <location>
        <position position="1"/>
    </location>
</feature>
<feature type="modified residue" description="Phosphotyrosine" evidence="2">
    <location>
        <position position="13"/>
    </location>
</feature>
<feature type="modified residue" description="Phosphotyrosine" evidence="2">
    <location>
        <position position="24"/>
    </location>
</feature>
<feature type="modified residue" description="Phosphothreonine" evidence="2">
    <location>
        <position position="49"/>
    </location>
</feature>
<feature type="modified residue" description="Phosphothreonine" evidence="2">
    <location>
        <position position="70"/>
    </location>
</feature>
<feature type="modified residue" description="Phosphothreonine" evidence="2">
    <location>
        <position position="177"/>
    </location>
</feature>
<feature type="modified residue" description="N6-acetyllysine" evidence="2">
    <location>
        <position position="264"/>
    </location>
</feature>
<feature type="modified residue" description="Phosphoserine" evidence="11">
    <location>
        <position position="319"/>
    </location>
</feature>
<feature type="modified residue" description="Phosphothreonine" evidence="2">
    <location>
        <position position="325"/>
    </location>
</feature>
<feature type="sequence variant" description="In strain: SPRET/Ei.">
    <original>S</original>
    <variation>A</variation>
    <location>
        <position position="321"/>
    </location>
</feature>
<feature type="mutagenesis site" description="Enhanced kinase activity. Over-production of thymocytes and hematopoietic stem cells and progenitor cells." evidence="8">
    <original>R</original>
    <variation>C</variation>
    <location>
        <position position="31"/>
    </location>
</feature>
<feature type="mutagenesis site" description="Loss of kinase activity. Pronounced reduction in thymocytes and hematopoietic stem cells and progenitor cells." evidence="8">
    <original>K</original>
    <variation>M</variation>
    <location>
        <position position="43"/>
    </location>
</feature>
<dbReference type="EC" id="2.7.11.22"/>
<dbReference type="EMBL" id="AF132483">
    <property type="protein sequence ID" value="AAD43504.1"/>
    <property type="molecule type" value="mRNA"/>
</dbReference>
<dbReference type="EMBL" id="AF132482">
    <property type="protein sequence ID" value="AAD43503.1"/>
    <property type="molecule type" value="mRNA"/>
</dbReference>
<dbReference type="EMBL" id="AK078973">
    <property type="protein sequence ID" value="BAC37489.1"/>
    <property type="molecule type" value="mRNA"/>
</dbReference>
<dbReference type="EMBL" id="X65068">
    <property type="protein sequence ID" value="CAA46201.1"/>
    <property type="molecule type" value="mRNA"/>
</dbReference>
<dbReference type="CCDS" id="CCDS19062.1"/>
<dbReference type="PIR" id="PN0483">
    <property type="entry name" value="PN0483"/>
</dbReference>
<dbReference type="RefSeq" id="NP_034003.1">
    <property type="nucleotide sequence ID" value="NM_009873.3"/>
</dbReference>
<dbReference type="RefSeq" id="XP_030109951.1">
    <property type="nucleotide sequence ID" value="XM_030254091.1"/>
</dbReference>
<dbReference type="SMR" id="Q64261"/>
<dbReference type="BioGRID" id="198649">
    <property type="interactions" value="15"/>
</dbReference>
<dbReference type="ComplexPortal" id="CPX-2079">
    <property type="entry name" value="Cyclin D3-CDK6 complex"/>
</dbReference>
<dbReference type="ComplexPortal" id="CPX-2080">
    <property type="entry name" value="Cyclin D1-CDK6 complex"/>
</dbReference>
<dbReference type="CORUM" id="Q64261"/>
<dbReference type="DIP" id="DIP-24175N"/>
<dbReference type="FunCoup" id="Q64261">
    <property type="interactions" value="1922"/>
</dbReference>
<dbReference type="IntAct" id="Q64261">
    <property type="interactions" value="6"/>
</dbReference>
<dbReference type="STRING" id="10090.ENSMUSP00000126024"/>
<dbReference type="iPTMnet" id="Q64261"/>
<dbReference type="PhosphoSitePlus" id="Q64261"/>
<dbReference type="jPOST" id="Q64261"/>
<dbReference type="PaxDb" id="10090-ENSMUSP00000126024"/>
<dbReference type="ProteomicsDB" id="280040"/>
<dbReference type="Pumba" id="Q64261"/>
<dbReference type="Antibodypedia" id="1130">
    <property type="antibodies" value="987 antibodies from 44 providers"/>
</dbReference>
<dbReference type="DNASU" id="12571"/>
<dbReference type="Ensembl" id="ENSMUST00000042410.5">
    <property type="protein sequence ID" value="ENSMUSP00000037925.5"/>
    <property type="gene ID" value="ENSMUSG00000040274.12"/>
</dbReference>
<dbReference type="Ensembl" id="ENSMUST00000165117.8">
    <property type="protein sequence ID" value="ENSMUSP00000126024.2"/>
    <property type="gene ID" value="ENSMUSG00000040274.12"/>
</dbReference>
<dbReference type="GeneID" id="12571"/>
<dbReference type="KEGG" id="mmu:12571"/>
<dbReference type="UCSC" id="uc008wgu.1">
    <property type="organism name" value="mouse"/>
</dbReference>
<dbReference type="AGR" id="MGI:1277162"/>
<dbReference type="CTD" id="1021"/>
<dbReference type="MGI" id="MGI:1277162">
    <property type="gene designation" value="Cdk6"/>
</dbReference>
<dbReference type="VEuPathDB" id="HostDB:ENSMUSG00000040274"/>
<dbReference type="eggNOG" id="KOG0594">
    <property type="taxonomic scope" value="Eukaryota"/>
</dbReference>
<dbReference type="GeneTree" id="ENSGT00940000157957"/>
<dbReference type="HOGENOM" id="CLU_000288_181_1_1"/>
<dbReference type="InParanoid" id="Q64261"/>
<dbReference type="OMA" id="YEEHRVI"/>
<dbReference type="OrthoDB" id="1732493at2759"/>
<dbReference type="PhylomeDB" id="Q64261"/>
<dbReference type="TreeFam" id="TF101022"/>
<dbReference type="Reactome" id="R-MMU-2559580">
    <property type="pathway name" value="Oxidative Stress Induced Senescence"/>
</dbReference>
<dbReference type="Reactome" id="R-MMU-2559582">
    <property type="pathway name" value="Senescence-Associated Secretory Phenotype (SASP)"/>
</dbReference>
<dbReference type="Reactome" id="R-MMU-2559585">
    <property type="pathway name" value="Oncogene Induced Senescence"/>
</dbReference>
<dbReference type="Reactome" id="R-MMU-69231">
    <property type="pathway name" value="Cyclin D associated events in G1"/>
</dbReference>
<dbReference type="Reactome" id="R-MMU-8934593">
    <property type="pathway name" value="Regulation of RUNX1 Expression and Activity"/>
</dbReference>
<dbReference type="Reactome" id="R-MMU-9754119">
    <property type="pathway name" value="Drug-mediated inhibition of CDK4/CDK6 activity"/>
</dbReference>
<dbReference type="BioGRID-ORCS" id="12571">
    <property type="hits" value="11 hits in 83 CRISPR screens"/>
</dbReference>
<dbReference type="ChiTaRS" id="Cdk6">
    <property type="organism name" value="mouse"/>
</dbReference>
<dbReference type="PRO" id="PR:Q64261"/>
<dbReference type="Proteomes" id="UP000000589">
    <property type="component" value="Chromosome 5"/>
</dbReference>
<dbReference type="RNAct" id="Q64261">
    <property type="molecule type" value="protein"/>
</dbReference>
<dbReference type="Bgee" id="ENSMUSG00000040274">
    <property type="expression patterns" value="Expressed in gastrula and 193 other cell types or tissues"/>
</dbReference>
<dbReference type="ExpressionAtlas" id="Q64261">
    <property type="expression patterns" value="baseline and differential"/>
</dbReference>
<dbReference type="GO" id="GO:0005813">
    <property type="term" value="C:centrosome"/>
    <property type="evidence" value="ECO:0000250"/>
    <property type="project" value="UniProtKB"/>
</dbReference>
<dbReference type="GO" id="GO:0097131">
    <property type="term" value="C:cyclin D1-CDK6 complex"/>
    <property type="evidence" value="ECO:0007669"/>
    <property type="project" value="Ensembl"/>
</dbReference>
<dbReference type="GO" id="GO:0097132">
    <property type="term" value="C:cyclin D2-CDK6 complex"/>
    <property type="evidence" value="ECO:0000314"/>
    <property type="project" value="MGI"/>
</dbReference>
<dbReference type="GO" id="GO:0097133">
    <property type="term" value="C:cyclin D3-CDK6 complex"/>
    <property type="evidence" value="ECO:0007669"/>
    <property type="project" value="Ensembl"/>
</dbReference>
<dbReference type="GO" id="GO:0005829">
    <property type="term" value="C:cytosol"/>
    <property type="evidence" value="ECO:0007669"/>
    <property type="project" value="Ensembl"/>
</dbReference>
<dbReference type="GO" id="GO:0005654">
    <property type="term" value="C:nucleoplasm"/>
    <property type="evidence" value="ECO:0007669"/>
    <property type="project" value="Ensembl"/>
</dbReference>
<dbReference type="GO" id="GO:0001726">
    <property type="term" value="C:ruffle"/>
    <property type="evidence" value="ECO:0007669"/>
    <property type="project" value="UniProtKB-SubCell"/>
</dbReference>
<dbReference type="GO" id="GO:0005524">
    <property type="term" value="F:ATP binding"/>
    <property type="evidence" value="ECO:0007669"/>
    <property type="project" value="UniProtKB-KW"/>
</dbReference>
<dbReference type="GO" id="GO:0030332">
    <property type="term" value="F:cyclin binding"/>
    <property type="evidence" value="ECO:0007669"/>
    <property type="project" value="Ensembl"/>
</dbReference>
<dbReference type="GO" id="GO:0004693">
    <property type="term" value="F:cyclin-dependent protein serine/threonine kinase activity"/>
    <property type="evidence" value="ECO:0007669"/>
    <property type="project" value="UniProtKB-EC"/>
</dbReference>
<dbReference type="GO" id="GO:0098770">
    <property type="term" value="F:FBXO family protein binding"/>
    <property type="evidence" value="ECO:0007669"/>
    <property type="project" value="Ensembl"/>
</dbReference>
<dbReference type="GO" id="GO:0016301">
    <property type="term" value="F:kinase activity"/>
    <property type="evidence" value="ECO:0000314"/>
    <property type="project" value="MGI"/>
</dbReference>
<dbReference type="GO" id="GO:0106310">
    <property type="term" value="F:protein serine kinase activity"/>
    <property type="evidence" value="ECO:0007669"/>
    <property type="project" value="RHEA"/>
</dbReference>
<dbReference type="GO" id="GO:0043697">
    <property type="term" value="P:cell dedifferentiation"/>
    <property type="evidence" value="ECO:0007669"/>
    <property type="project" value="Ensembl"/>
</dbReference>
<dbReference type="GO" id="GO:0051301">
    <property type="term" value="P:cell division"/>
    <property type="evidence" value="ECO:0007669"/>
    <property type="project" value="UniProtKB-KW"/>
</dbReference>
<dbReference type="GO" id="GO:0006974">
    <property type="term" value="P:DNA damage response"/>
    <property type="evidence" value="ECO:0007669"/>
    <property type="project" value="Ensembl"/>
</dbReference>
<dbReference type="GO" id="GO:0000082">
    <property type="term" value="P:G1/S transition of mitotic cell cycle"/>
    <property type="evidence" value="ECO:0007669"/>
    <property type="project" value="Ensembl"/>
</dbReference>
<dbReference type="GO" id="GO:0042063">
    <property type="term" value="P:gliogenesis"/>
    <property type="evidence" value="ECO:0007669"/>
    <property type="project" value="Ensembl"/>
</dbReference>
<dbReference type="GO" id="GO:0002244">
    <property type="term" value="P:hematopoietic progenitor cell differentiation"/>
    <property type="evidence" value="ECO:0000315"/>
    <property type="project" value="MGI"/>
</dbReference>
<dbReference type="GO" id="GO:0060218">
    <property type="term" value="P:hematopoietic stem cell differentiation"/>
    <property type="evidence" value="ECO:0000315"/>
    <property type="project" value="MGI"/>
</dbReference>
<dbReference type="GO" id="GO:0030097">
    <property type="term" value="P:hemopoiesis"/>
    <property type="evidence" value="ECO:0000315"/>
    <property type="project" value="BHF-UCL"/>
</dbReference>
<dbReference type="GO" id="GO:0045786">
    <property type="term" value="P:negative regulation of cell cycle"/>
    <property type="evidence" value="ECO:0007669"/>
    <property type="project" value="Ensembl"/>
</dbReference>
<dbReference type="GO" id="GO:2000773">
    <property type="term" value="P:negative regulation of cellular senescence"/>
    <property type="evidence" value="ECO:0007669"/>
    <property type="project" value="Ensembl"/>
</dbReference>
<dbReference type="GO" id="GO:0050680">
    <property type="term" value="P:negative regulation of epithelial cell proliferation"/>
    <property type="evidence" value="ECO:0007669"/>
    <property type="project" value="Ensembl"/>
</dbReference>
<dbReference type="GO" id="GO:0045656">
    <property type="term" value="P:negative regulation of monocyte differentiation"/>
    <property type="evidence" value="ECO:0000250"/>
    <property type="project" value="UniProtKB"/>
</dbReference>
<dbReference type="GO" id="GO:0045668">
    <property type="term" value="P:negative regulation of osteoblast differentiation"/>
    <property type="evidence" value="ECO:0007669"/>
    <property type="project" value="Ensembl"/>
</dbReference>
<dbReference type="GO" id="GO:0000122">
    <property type="term" value="P:negative regulation of transcription by RNA polymerase II"/>
    <property type="evidence" value="ECO:0000315"/>
    <property type="project" value="MGI"/>
</dbReference>
<dbReference type="GO" id="GO:0007219">
    <property type="term" value="P:Notch signaling pathway"/>
    <property type="evidence" value="ECO:0000314"/>
    <property type="project" value="MGI"/>
</dbReference>
<dbReference type="GO" id="GO:0001954">
    <property type="term" value="P:positive regulation of cell-matrix adhesion"/>
    <property type="evidence" value="ECO:0007669"/>
    <property type="project" value="Ensembl"/>
</dbReference>
<dbReference type="GO" id="GO:0048146">
    <property type="term" value="P:positive regulation of fibroblast proliferation"/>
    <property type="evidence" value="ECO:0007669"/>
    <property type="project" value="Ensembl"/>
</dbReference>
<dbReference type="GO" id="GO:0010628">
    <property type="term" value="P:positive regulation of gene expression"/>
    <property type="evidence" value="ECO:0000314"/>
    <property type="project" value="MGI"/>
</dbReference>
<dbReference type="GO" id="GO:0045646">
    <property type="term" value="P:regulation of erythrocyte differentiation"/>
    <property type="evidence" value="ECO:0007669"/>
    <property type="project" value="Ensembl"/>
</dbReference>
<dbReference type="GO" id="GO:1902036">
    <property type="term" value="P:regulation of hematopoietic stem cell differentiation"/>
    <property type="evidence" value="ECO:0000315"/>
    <property type="project" value="MGI"/>
</dbReference>
<dbReference type="GO" id="GO:0009615">
    <property type="term" value="P:response to virus"/>
    <property type="evidence" value="ECO:0007669"/>
    <property type="project" value="Ensembl"/>
</dbReference>
<dbReference type="GO" id="GO:0033077">
    <property type="term" value="P:T cell differentiation in thymus"/>
    <property type="evidence" value="ECO:0000315"/>
    <property type="project" value="MGI"/>
</dbReference>
<dbReference type="GO" id="GO:0003323">
    <property type="term" value="P:type B pancreatic cell development"/>
    <property type="evidence" value="ECO:0007669"/>
    <property type="project" value="Ensembl"/>
</dbReference>
<dbReference type="CDD" id="cd07862">
    <property type="entry name" value="STKc_CDK6"/>
    <property type="match status" value="1"/>
</dbReference>
<dbReference type="FunFam" id="3.30.200.20:FF:000124">
    <property type="entry name" value="Cyclin-dependent kinase 4"/>
    <property type="match status" value="1"/>
</dbReference>
<dbReference type="FunFam" id="1.10.510.10:FF:000205">
    <property type="entry name" value="Cyclin-dependent kinase 6"/>
    <property type="match status" value="1"/>
</dbReference>
<dbReference type="Gene3D" id="3.30.200.20">
    <property type="entry name" value="Phosphorylase Kinase, domain 1"/>
    <property type="match status" value="1"/>
</dbReference>
<dbReference type="Gene3D" id="1.10.510.10">
    <property type="entry name" value="Transferase(Phosphotransferase) domain 1"/>
    <property type="match status" value="1"/>
</dbReference>
<dbReference type="InterPro" id="IPR050108">
    <property type="entry name" value="CDK"/>
</dbReference>
<dbReference type="InterPro" id="IPR028788">
    <property type="entry name" value="CDK6"/>
</dbReference>
<dbReference type="InterPro" id="IPR011009">
    <property type="entry name" value="Kinase-like_dom_sf"/>
</dbReference>
<dbReference type="InterPro" id="IPR000719">
    <property type="entry name" value="Prot_kinase_dom"/>
</dbReference>
<dbReference type="InterPro" id="IPR017441">
    <property type="entry name" value="Protein_kinase_ATP_BS"/>
</dbReference>
<dbReference type="InterPro" id="IPR008271">
    <property type="entry name" value="Ser/Thr_kinase_AS"/>
</dbReference>
<dbReference type="PANTHER" id="PTHR24056">
    <property type="entry name" value="CELL DIVISION PROTEIN KINASE"/>
    <property type="match status" value="1"/>
</dbReference>
<dbReference type="PANTHER" id="PTHR24056:SF130">
    <property type="entry name" value="CYCLIN-DEPENDENT KINASE 6"/>
    <property type="match status" value="1"/>
</dbReference>
<dbReference type="Pfam" id="PF00069">
    <property type="entry name" value="Pkinase"/>
    <property type="match status" value="1"/>
</dbReference>
<dbReference type="SMART" id="SM00220">
    <property type="entry name" value="S_TKc"/>
    <property type="match status" value="1"/>
</dbReference>
<dbReference type="SUPFAM" id="SSF56112">
    <property type="entry name" value="Protein kinase-like (PK-like)"/>
    <property type="match status" value="1"/>
</dbReference>
<dbReference type="PROSITE" id="PS00107">
    <property type="entry name" value="PROTEIN_KINASE_ATP"/>
    <property type="match status" value="1"/>
</dbReference>
<dbReference type="PROSITE" id="PS50011">
    <property type="entry name" value="PROTEIN_KINASE_DOM"/>
    <property type="match status" value="1"/>
</dbReference>
<dbReference type="PROSITE" id="PS00108">
    <property type="entry name" value="PROTEIN_KINASE_ST"/>
    <property type="match status" value="1"/>
</dbReference>
<gene>
    <name type="primary">Cdk6</name>
    <name type="synonym">Cdkn6</name>
    <name type="synonym">Crk2</name>
</gene>
<organism>
    <name type="scientific">Mus musculus</name>
    <name type="common">Mouse</name>
    <dbReference type="NCBI Taxonomy" id="10090"/>
    <lineage>
        <taxon>Eukaryota</taxon>
        <taxon>Metazoa</taxon>
        <taxon>Chordata</taxon>
        <taxon>Craniata</taxon>
        <taxon>Vertebrata</taxon>
        <taxon>Euteleostomi</taxon>
        <taxon>Mammalia</taxon>
        <taxon>Eutheria</taxon>
        <taxon>Euarchontoglires</taxon>
        <taxon>Glires</taxon>
        <taxon>Rodentia</taxon>
        <taxon>Myomorpha</taxon>
        <taxon>Muroidea</taxon>
        <taxon>Muridae</taxon>
        <taxon>Murinae</taxon>
        <taxon>Mus</taxon>
        <taxon>Mus</taxon>
    </lineage>
</organism>
<accession>Q64261</accession>
<accession>Q9R1D2</accession>
<accession>Q9R1D3</accession>
<sequence>MEKDSLSRADQQYECVAEIGEGAYGKVFKARDLKNGGRFVALKRVRVQTSEEGMPLSTIREVAVLRHLETFEHPNVVRLFDVCTVSRTDRETKLTLVFEHVDQDLTTYLDKVPEPGVPTETIKDMMFQLLRGLDFLHSHRVVHRDLKPQNILVTSSGQIKLADFGLARIYSFQMALTSVVVTLWYRAPEVLLQSSYATPVDLWSVGCIFAEMFRRKPLFRGSSDVDQLGKILDIIGLPGEEDWPRDVALPRQAFHSKSAQPIEKFVTDIDELGKDLLLKCLTFNPAKRISAYGALNHPYFQDLERYKDNLNSHLPSNQSTSELNTA</sequence>
<protein>
    <recommendedName>
        <fullName>Cyclin-dependent kinase 6</fullName>
        <ecNumber>2.7.11.22</ecNumber>
    </recommendedName>
    <alternativeName>
        <fullName>CR2 protein kinase</fullName>
        <shortName>CRK2</shortName>
    </alternativeName>
    <alternativeName>
        <fullName>Cell division protein kinase 6</fullName>
    </alternativeName>
    <alternativeName>
        <fullName>Serine/threonine-protein kinase PLSTIRE</fullName>
    </alternativeName>
</protein>
<name>CDK6_MOUSE</name>
<evidence type="ECO:0000250" key="1"/>
<evidence type="ECO:0000250" key="2">
    <source>
        <dbReference type="UniProtKB" id="Q00534"/>
    </source>
</evidence>
<evidence type="ECO:0000255" key="3">
    <source>
        <dbReference type="PROSITE-ProRule" id="PRU00159"/>
    </source>
</evidence>
<evidence type="ECO:0000255" key="4">
    <source>
        <dbReference type="PROSITE-ProRule" id="PRU10027"/>
    </source>
</evidence>
<evidence type="ECO:0000269" key="5">
    <source>
    </source>
</evidence>
<evidence type="ECO:0000269" key="6">
    <source>
    </source>
</evidence>
<evidence type="ECO:0000269" key="7">
    <source>
    </source>
</evidence>
<evidence type="ECO:0000269" key="8">
    <source>
    </source>
</evidence>
<evidence type="ECO:0000269" key="9">
    <source>
    </source>
</evidence>
<evidence type="ECO:0000305" key="10"/>
<evidence type="ECO:0007744" key="11">
    <source>
    </source>
</evidence>
<keyword id="KW-0007">Acetylation</keyword>
<keyword id="KW-0067">ATP-binding</keyword>
<keyword id="KW-0131">Cell cycle</keyword>
<keyword id="KW-0132">Cell division</keyword>
<keyword id="KW-0966">Cell projection</keyword>
<keyword id="KW-0963">Cytoplasm</keyword>
<keyword id="KW-0206">Cytoskeleton</keyword>
<keyword id="KW-0221">Differentiation</keyword>
<keyword id="KW-0418">Kinase</keyword>
<keyword id="KW-0547">Nucleotide-binding</keyword>
<keyword id="KW-0539">Nucleus</keyword>
<keyword id="KW-0597">Phosphoprotein</keyword>
<keyword id="KW-1185">Reference proteome</keyword>
<keyword id="KW-0723">Serine/threonine-protein kinase</keyword>
<keyword id="KW-0808">Transferase</keyword>
<comment type="function">
    <text evidence="2 6 7 8">Serine/threonine-protein kinase involved in the control of the cell cycle and differentiation; promotes G1/S transition. Phosphorylates pRB/RB1 and NPM1. Interacts with D-type G1 cyclins during interphase at G1 to form a pRB/RB1 kinase and controls the entrance into the cell cycle. Involved in initiation and maintenance of cell cycle exit during cell differentiation; prevents cell proliferation and negatively regulates cell differentiation, but is required for the proliferation of specific cell types (e.g. erythroid and hematopoietic cells). Essential for cell proliferation within the dentate gyrus of the hippocampus and the subventricular zone of the lateral ventricles. Required during thymocyte development. Promotes the production of newborn neurons, probably by modulating G1 length. Promotes, at least in astrocytes, changes in patterns of gene expression, changes in the actin cytoskeleton including loss of stress fibers, and enhanced motility during cell differentiation. Prevents myeloid differentiation by interfering with RUNX1 and reducing its transcription transactivation activity, but promotes proliferation of normal myeloid progenitors. Delays senescence. Promotes the proliferation of beta-cells in pancreatic islets of Langerhans (By similarity). May play a role in the centrosome organization during the cell cycle phases.</text>
</comment>
<comment type="catalytic activity">
    <reaction>
        <text>L-seryl-[protein] + ATP = O-phospho-L-seryl-[protein] + ADP + H(+)</text>
        <dbReference type="Rhea" id="RHEA:17989"/>
        <dbReference type="Rhea" id="RHEA-COMP:9863"/>
        <dbReference type="Rhea" id="RHEA-COMP:11604"/>
        <dbReference type="ChEBI" id="CHEBI:15378"/>
        <dbReference type="ChEBI" id="CHEBI:29999"/>
        <dbReference type="ChEBI" id="CHEBI:30616"/>
        <dbReference type="ChEBI" id="CHEBI:83421"/>
        <dbReference type="ChEBI" id="CHEBI:456216"/>
        <dbReference type="EC" id="2.7.11.22"/>
    </reaction>
</comment>
<comment type="catalytic activity">
    <reaction>
        <text>L-threonyl-[protein] + ATP = O-phospho-L-threonyl-[protein] + ADP + H(+)</text>
        <dbReference type="Rhea" id="RHEA:46608"/>
        <dbReference type="Rhea" id="RHEA-COMP:11060"/>
        <dbReference type="Rhea" id="RHEA-COMP:11605"/>
        <dbReference type="ChEBI" id="CHEBI:15378"/>
        <dbReference type="ChEBI" id="CHEBI:30013"/>
        <dbReference type="ChEBI" id="CHEBI:30616"/>
        <dbReference type="ChEBI" id="CHEBI:61977"/>
        <dbReference type="ChEBI" id="CHEBI:456216"/>
        <dbReference type="EC" id="2.7.11.22"/>
    </reaction>
</comment>
<comment type="activity regulation">
    <text evidence="1">Activated by Thr-177 phosphorylation and Tyr-24 dephosphorylation (By similarity). Rapidly down-regulated prior to cell differentiation (e.g. erythroid and osteoblast) (By similarity).</text>
</comment>
<comment type="subunit">
    <text evidence="1">Interaction with D-type G1 cyclins. Cyclin binding promotes enzyme activation by phosphorylation at Thr-177 (By similarity). Binds to RUNX1, CDKN2D, FBXO7 and CDKN2C/p18-INK4c. Forms a cytoplasmic complex with Hsp90/HSP90AB1 and CDC37. FBXO7-binding promotes D-type cyclin binding (By similarity).</text>
</comment>
<comment type="interaction">
    <interactant intactId="EBI-847380">
        <id>Q64261</id>
    </interactant>
    <interactant intactId="EBI-847337">
        <id>P30282</id>
        <label>Ccnd3</label>
    </interactant>
    <organismsDiffer>false</organismsDiffer>
    <experiments>2</experiments>
</comment>
<comment type="interaction">
    <interactant intactId="EBI-847380">
        <id>Q64261</id>
    </interactant>
    <interactant intactId="EBI-764369">
        <id>P05627</id>
        <label>Jun</label>
    </interactant>
    <organismsDiffer>false</organismsDiffer>
    <experiments>2</experiments>
</comment>
<comment type="interaction">
    <interactant intactId="EBI-847380">
        <id>Q64261</id>
    </interactant>
    <interactant intactId="EBI-602878">
        <id>P42227</id>
        <label>Stat3</label>
    </interactant>
    <organismsDiffer>false</organismsDiffer>
    <experiments>3</experiments>
</comment>
<comment type="subcellular location">
    <subcellularLocation>
        <location evidence="2">Cytoplasm</location>
    </subcellularLocation>
    <subcellularLocation>
        <location evidence="2">Nucleus</location>
    </subcellularLocation>
    <subcellularLocation>
        <location evidence="2">Cell projection</location>
        <location evidence="2">Ruffle</location>
    </subcellularLocation>
    <subcellularLocation>
        <location evidence="2">Cytoplasm</location>
        <location evidence="2">Cytoskeleton</location>
        <location evidence="2">Microtubule organizing center</location>
        <location evidence="2">Centrosome</location>
    </subcellularLocation>
    <text evidence="2 9">Localized to the ruffling edge of spreading fibroblasts. Kinase activity only in nucleus (By similarity). Present in the cytosol and in the nucleus in interphase cells and at the centrosome during mitosis from prophase to telophase (By similarity). Localized to the cytosol of neurons and showed prominent staining around either side of the nucleus.</text>
</comment>
<comment type="tissue specificity">
    <text evidence="7 9">Expressed in subgranular zone (SGZ) of the hippocampal dentate gyrus (DG) and the subventricular zone (SVZ) of the lateral ventricles whose neural precursor cells (NPC) give rise to dentate granule neurons and olfactory bulb (OB) interneurons, respectively. Expressed in the neuroepithelium of the cerebral cortex of the developing brain.</text>
</comment>
<comment type="PTM">
    <text evidence="1">Thr-177 phosphorylation and Tyr-24 dephosphorylation promotes kinase activity.</text>
</comment>
<comment type="disruption phenotype">
    <text evidence="5 7 8">Slight anemia and defective proliferation of some hematopoietic cells, thymocytes and progenitor cells. Females are reduced in size and often sterile. Prevents the expansion of neuronally committed precursors by prematurely exiting the cell cycle and lengthening G1 phase duration, reducing concomitantly the production of newborn neurons.</text>
</comment>
<comment type="similarity">
    <text evidence="10">Belongs to the protein kinase superfamily. CMGC Ser/Thr protein kinase family. CDC2/CDKX subfamily.</text>
</comment>